<comment type="function">
    <text evidence="1">Catalyzes the acyloin condensation reaction between C atoms 2 and 3 of pyruvate and glyceraldehyde 3-phosphate to yield 1-deoxy-D-xylulose-5-phosphate (DXP).</text>
</comment>
<comment type="catalytic activity">
    <reaction evidence="1">
        <text>D-glyceraldehyde 3-phosphate + pyruvate + H(+) = 1-deoxy-D-xylulose 5-phosphate + CO2</text>
        <dbReference type="Rhea" id="RHEA:12605"/>
        <dbReference type="ChEBI" id="CHEBI:15361"/>
        <dbReference type="ChEBI" id="CHEBI:15378"/>
        <dbReference type="ChEBI" id="CHEBI:16526"/>
        <dbReference type="ChEBI" id="CHEBI:57792"/>
        <dbReference type="ChEBI" id="CHEBI:59776"/>
        <dbReference type="EC" id="2.2.1.7"/>
    </reaction>
</comment>
<comment type="cofactor">
    <cofactor evidence="1">
        <name>Mg(2+)</name>
        <dbReference type="ChEBI" id="CHEBI:18420"/>
    </cofactor>
    <text evidence="1">Binds 1 Mg(2+) ion per subunit.</text>
</comment>
<comment type="cofactor">
    <cofactor evidence="1">
        <name>thiamine diphosphate</name>
        <dbReference type="ChEBI" id="CHEBI:58937"/>
    </cofactor>
    <text evidence="1">Binds 1 thiamine pyrophosphate per subunit.</text>
</comment>
<comment type="pathway">
    <text evidence="1">Metabolic intermediate biosynthesis; 1-deoxy-D-xylulose 5-phosphate biosynthesis; 1-deoxy-D-xylulose 5-phosphate from D-glyceraldehyde 3-phosphate and pyruvate: step 1/1.</text>
</comment>
<comment type="subunit">
    <text evidence="1">Homodimer.</text>
</comment>
<comment type="similarity">
    <text evidence="1">Belongs to the transketolase family. DXPS subfamily.</text>
</comment>
<protein>
    <recommendedName>
        <fullName evidence="1">1-deoxy-D-xylulose-5-phosphate synthase</fullName>
        <ecNumber evidence="1">2.2.1.7</ecNumber>
    </recommendedName>
    <alternativeName>
        <fullName evidence="1">1-deoxyxylulose-5-phosphate synthase</fullName>
        <shortName evidence="1">DXP synthase</shortName>
        <shortName evidence="1">DXPS</shortName>
    </alternativeName>
</protein>
<organism>
    <name type="scientific">Polaromonas naphthalenivorans (strain CJ2)</name>
    <dbReference type="NCBI Taxonomy" id="365044"/>
    <lineage>
        <taxon>Bacteria</taxon>
        <taxon>Pseudomonadati</taxon>
        <taxon>Pseudomonadota</taxon>
        <taxon>Betaproteobacteria</taxon>
        <taxon>Burkholderiales</taxon>
        <taxon>Comamonadaceae</taxon>
        <taxon>Polaromonas</taxon>
    </lineage>
</organism>
<reference key="1">
    <citation type="journal article" date="2009" name="Environ. Microbiol.">
        <title>The genome of Polaromonas naphthalenivorans strain CJ2, isolated from coal tar-contaminated sediment, reveals physiological and metabolic versatility and evolution through extensive horizontal gene transfer.</title>
        <authorList>
            <person name="Yagi J.M."/>
            <person name="Sims D."/>
            <person name="Brettin T."/>
            <person name="Bruce D."/>
            <person name="Madsen E.L."/>
        </authorList>
    </citation>
    <scope>NUCLEOTIDE SEQUENCE [LARGE SCALE GENOMIC DNA]</scope>
    <source>
        <strain>CJ2</strain>
    </source>
</reference>
<proteinExistence type="inferred from homology"/>
<evidence type="ECO:0000255" key="1">
    <source>
        <dbReference type="HAMAP-Rule" id="MF_00315"/>
    </source>
</evidence>
<gene>
    <name evidence="1" type="primary">dxs</name>
    <name type="ordered locus">Pnap_1501</name>
</gene>
<name>DXS_POLNA</name>
<sequence>MYSLLETINSPADLRRLPRAQLKALADELRAYVIDSVSQTGGHLSSNLGTVELTVALHYVFNTPDDRLVWDVGHQTYPHKILTGRRERMGTLRQLGGLSGFPRRDESEYDTFGTAHSSTSISAALGMALAAEFKGENRNAVAVIGDGSMSAGMAFEALNNAGVHDHCKLLVVLNDNDMSISPPVGALNRHLAQLMSGRFYASARHVGKKVLQVAPPLLELARRLESHAKGMVVPAAVFESFGFNYIGPIDGHDLESLIPTLENIRHLMATGAGPQFLHVVTKKGQGYKLAEADPIAYHGPGKFDPSMGLQKSSAPAKQTFTQVFGRWLCDMAEHDPRLVGITPAMREGSGMVEFHKRFPKRYHDVGIAEQHAVTFAAGMACEGLKPVLAIYSTFLQRGYDQLIHDVALQNLPVVFALDRAGLVGADGATHAGAYDIPYLRCIPNMGIACPADENECRKLLTTAFEQDSPVAVRYPRGAGAGVEPEAGLKSLPFGKGEIRREGSGIAILAFGTLLYPALQAAEKLGATVVNMRWAKPLDTELLLKVAAGHEVLVTLEEGAIMGGAGSAVGEALQAAGVVKPLLQLGLKDEFIEHGEVAVLLALQGLDAAGIEAAVRSRFGSFKSTDPLAKVMLKSVA</sequence>
<dbReference type="EC" id="2.2.1.7" evidence="1"/>
<dbReference type="EMBL" id="CP000529">
    <property type="protein sequence ID" value="ABM36815.1"/>
    <property type="molecule type" value="Genomic_DNA"/>
</dbReference>
<dbReference type="RefSeq" id="WP_011800902.1">
    <property type="nucleotide sequence ID" value="NC_008781.1"/>
</dbReference>
<dbReference type="SMR" id="A1VMD7"/>
<dbReference type="STRING" id="365044.Pnap_1501"/>
<dbReference type="KEGG" id="pna:Pnap_1501"/>
<dbReference type="eggNOG" id="COG1154">
    <property type="taxonomic scope" value="Bacteria"/>
</dbReference>
<dbReference type="HOGENOM" id="CLU_009227_1_4_4"/>
<dbReference type="OrthoDB" id="9803371at2"/>
<dbReference type="UniPathway" id="UPA00064">
    <property type="reaction ID" value="UER00091"/>
</dbReference>
<dbReference type="Proteomes" id="UP000000644">
    <property type="component" value="Chromosome"/>
</dbReference>
<dbReference type="GO" id="GO:0005829">
    <property type="term" value="C:cytosol"/>
    <property type="evidence" value="ECO:0007669"/>
    <property type="project" value="TreeGrafter"/>
</dbReference>
<dbReference type="GO" id="GO:0008661">
    <property type="term" value="F:1-deoxy-D-xylulose-5-phosphate synthase activity"/>
    <property type="evidence" value="ECO:0007669"/>
    <property type="project" value="UniProtKB-UniRule"/>
</dbReference>
<dbReference type="GO" id="GO:0000287">
    <property type="term" value="F:magnesium ion binding"/>
    <property type="evidence" value="ECO:0007669"/>
    <property type="project" value="UniProtKB-UniRule"/>
</dbReference>
<dbReference type="GO" id="GO:0030976">
    <property type="term" value="F:thiamine pyrophosphate binding"/>
    <property type="evidence" value="ECO:0007669"/>
    <property type="project" value="UniProtKB-UniRule"/>
</dbReference>
<dbReference type="GO" id="GO:0052865">
    <property type="term" value="P:1-deoxy-D-xylulose 5-phosphate biosynthetic process"/>
    <property type="evidence" value="ECO:0007669"/>
    <property type="project" value="UniProtKB-UniPathway"/>
</dbReference>
<dbReference type="GO" id="GO:0019288">
    <property type="term" value="P:isopentenyl diphosphate biosynthetic process, methylerythritol 4-phosphate pathway"/>
    <property type="evidence" value="ECO:0007669"/>
    <property type="project" value="TreeGrafter"/>
</dbReference>
<dbReference type="GO" id="GO:0016114">
    <property type="term" value="P:terpenoid biosynthetic process"/>
    <property type="evidence" value="ECO:0007669"/>
    <property type="project" value="UniProtKB-UniRule"/>
</dbReference>
<dbReference type="GO" id="GO:0009228">
    <property type="term" value="P:thiamine biosynthetic process"/>
    <property type="evidence" value="ECO:0007669"/>
    <property type="project" value="UniProtKB-UniRule"/>
</dbReference>
<dbReference type="CDD" id="cd02007">
    <property type="entry name" value="TPP_DXS"/>
    <property type="match status" value="1"/>
</dbReference>
<dbReference type="CDD" id="cd07033">
    <property type="entry name" value="TPP_PYR_DXS_TK_like"/>
    <property type="match status" value="1"/>
</dbReference>
<dbReference type="FunFam" id="3.40.50.920:FF:000002">
    <property type="entry name" value="1-deoxy-D-xylulose-5-phosphate synthase"/>
    <property type="match status" value="1"/>
</dbReference>
<dbReference type="FunFam" id="3.40.50.970:FF:000005">
    <property type="entry name" value="1-deoxy-D-xylulose-5-phosphate synthase"/>
    <property type="match status" value="1"/>
</dbReference>
<dbReference type="Gene3D" id="3.40.50.920">
    <property type="match status" value="1"/>
</dbReference>
<dbReference type="Gene3D" id="3.40.50.970">
    <property type="match status" value="2"/>
</dbReference>
<dbReference type="HAMAP" id="MF_00315">
    <property type="entry name" value="DXP_synth"/>
    <property type="match status" value="1"/>
</dbReference>
<dbReference type="InterPro" id="IPR005477">
    <property type="entry name" value="Dxylulose-5-P_synthase"/>
</dbReference>
<dbReference type="InterPro" id="IPR029061">
    <property type="entry name" value="THDP-binding"/>
</dbReference>
<dbReference type="InterPro" id="IPR009014">
    <property type="entry name" value="Transketo_C/PFOR_II"/>
</dbReference>
<dbReference type="InterPro" id="IPR005475">
    <property type="entry name" value="Transketolase-like_Pyr-bd"/>
</dbReference>
<dbReference type="InterPro" id="IPR020826">
    <property type="entry name" value="Transketolase_BS"/>
</dbReference>
<dbReference type="InterPro" id="IPR033248">
    <property type="entry name" value="Transketolase_C"/>
</dbReference>
<dbReference type="InterPro" id="IPR049557">
    <property type="entry name" value="Transketolase_CS"/>
</dbReference>
<dbReference type="NCBIfam" id="TIGR00204">
    <property type="entry name" value="dxs"/>
    <property type="match status" value="1"/>
</dbReference>
<dbReference type="NCBIfam" id="NF003933">
    <property type="entry name" value="PRK05444.2-2"/>
    <property type="match status" value="1"/>
</dbReference>
<dbReference type="PANTHER" id="PTHR43322">
    <property type="entry name" value="1-D-DEOXYXYLULOSE 5-PHOSPHATE SYNTHASE-RELATED"/>
    <property type="match status" value="1"/>
</dbReference>
<dbReference type="PANTHER" id="PTHR43322:SF5">
    <property type="entry name" value="1-DEOXY-D-XYLULOSE-5-PHOSPHATE SYNTHASE, CHLOROPLASTIC"/>
    <property type="match status" value="1"/>
</dbReference>
<dbReference type="Pfam" id="PF13292">
    <property type="entry name" value="DXP_synthase_N"/>
    <property type="match status" value="1"/>
</dbReference>
<dbReference type="Pfam" id="PF02779">
    <property type="entry name" value="Transket_pyr"/>
    <property type="match status" value="1"/>
</dbReference>
<dbReference type="Pfam" id="PF02780">
    <property type="entry name" value="Transketolase_C"/>
    <property type="match status" value="1"/>
</dbReference>
<dbReference type="SMART" id="SM00861">
    <property type="entry name" value="Transket_pyr"/>
    <property type="match status" value="1"/>
</dbReference>
<dbReference type="SUPFAM" id="SSF52518">
    <property type="entry name" value="Thiamin diphosphate-binding fold (THDP-binding)"/>
    <property type="match status" value="2"/>
</dbReference>
<dbReference type="SUPFAM" id="SSF52922">
    <property type="entry name" value="TK C-terminal domain-like"/>
    <property type="match status" value="1"/>
</dbReference>
<dbReference type="PROSITE" id="PS00801">
    <property type="entry name" value="TRANSKETOLASE_1"/>
    <property type="match status" value="1"/>
</dbReference>
<dbReference type="PROSITE" id="PS00802">
    <property type="entry name" value="TRANSKETOLASE_2"/>
    <property type="match status" value="1"/>
</dbReference>
<keyword id="KW-0414">Isoprene biosynthesis</keyword>
<keyword id="KW-0460">Magnesium</keyword>
<keyword id="KW-0479">Metal-binding</keyword>
<keyword id="KW-1185">Reference proteome</keyword>
<keyword id="KW-0784">Thiamine biosynthesis</keyword>
<keyword id="KW-0786">Thiamine pyrophosphate</keyword>
<keyword id="KW-0808">Transferase</keyword>
<feature type="chain" id="PRO_1000019054" description="1-deoxy-D-xylulose-5-phosphate synthase">
    <location>
        <begin position="1"/>
        <end position="636"/>
    </location>
</feature>
<feature type="binding site" evidence="1">
    <location>
        <position position="74"/>
    </location>
    <ligand>
        <name>thiamine diphosphate</name>
        <dbReference type="ChEBI" id="CHEBI:58937"/>
    </ligand>
</feature>
<feature type="binding site" evidence="1">
    <location>
        <begin position="115"/>
        <end position="117"/>
    </location>
    <ligand>
        <name>thiamine diphosphate</name>
        <dbReference type="ChEBI" id="CHEBI:58937"/>
    </ligand>
</feature>
<feature type="binding site" evidence="1">
    <location>
        <position position="146"/>
    </location>
    <ligand>
        <name>Mg(2+)</name>
        <dbReference type="ChEBI" id="CHEBI:18420"/>
    </ligand>
</feature>
<feature type="binding site" evidence="1">
    <location>
        <begin position="147"/>
        <end position="148"/>
    </location>
    <ligand>
        <name>thiamine diphosphate</name>
        <dbReference type="ChEBI" id="CHEBI:58937"/>
    </ligand>
</feature>
<feature type="binding site" evidence="1">
    <location>
        <position position="176"/>
    </location>
    <ligand>
        <name>Mg(2+)</name>
        <dbReference type="ChEBI" id="CHEBI:18420"/>
    </ligand>
</feature>
<feature type="binding site" evidence="1">
    <location>
        <position position="176"/>
    </location>
    <ligand>
        <name>thiamine diphosphate</name>
        <dbReference type="ChEBI" id="CHEBI:58937"/>
    </ligand>
</feature>
<feature type="binding site" evidence="1">
    <location>
        <position position="287"/>
    </location>
    <ligand>
        <name>thiamine diphosphate</name>
        <dbReference type="ChEBI" id="CHEBI:58937"/>
    </ligand>
</feature>
<feature type="binding site" evidence="1">
    <location>
        <position position="369"/>
    </location>
    <ligand>
        <name>thiamine diphosphate</name>
        <dbReference type="ChEBI" id="CHEBI:58937"/>
    </ligand>
</feature>
<accession>A1VMD7</accession>